<name>RABL6_MOUSE</name>
<accession>Q5U3K5</accession>
<accession>A2AJB0</accession>
<accession>Q3TAT5</accession>
<accession>Q3TRU4</accession>
<accession>Q6PDP8</accession>
<accession>Q8BFS4</accession>
<accession>Q8CGJ9</accession>
<gene>
    <name type="primary">Rabl6</name>
    <name type="synonym">Parf</name>
</gene>
<organism>
    <name type="scientific">Mus musculus</name>
    <name type="common">Mouse</name>
    <dbReference type="NCBI Taxonomy" id="10090"/>
    <lineage>
        <taxon>Eukaryota</taxon>
        <taxon>Metazoa</taxon>
        <taxon>Chordata</taxon>
        <taxon>Craniata</taxon>
        <taxon>Vertebrata</taxon>
        <taxon>Euteleostomi</taxon>
        <taxon>Mammalia</taxon>
        <taxon>Eutheria</taxon>
        <taxon>Euarchontoglires</taxon>
        <taxon>Glires</taxon>
        <taxon>Rodentia</taxon>
        <taxon>Myomorpha</taxon>
        <taxon>Muroidea</taxon>
        <taxon>Muridae</taxon>
        <taxon>Murinae</taxon>
        <taxon>Mus</taxon>
        <taxon>Mus</taxon>
    </lineage>
</organism>
<reference key="1">
    <citation type="journal article" date="2005" name="Science">
        <title>The transcriptional landscape of the mammalian genome.</title>
        <authorList>
            <person name="Carninci P."/>
            <person name="Kasukawa T."/>
            <person name="Katayama S."/>
            <person name="Gough J."/>
            <person name="Frith M.C."/>
            <person name="Maeda N."/>
            <person name="Oyama R."/>
            <person name="Ravasi T."/>
            <person name="Lenhard B."/>
            <person name="Wells C."/>
            <person name="Kodzius R."/>
            <person name="Shimokawa K."/>
            <person name="Bajic V.B."/>
            <person name="Brenner S.E."/>
            <person name="Batalov S."/>
            <person name="Forrest A.R."/>
            <person name="Zavolan M."/>
            <person name="Davis M.J."/>
            <person name="Wilming L.G."/>
            <person name="Aidinis V."/>
            <person name="Allen J.E."/>
            <person name="Ambesi-Impiombato A."/>
            <person name="Apweiler R."/>
            <person name="Aturaliya R.N."/>
            <person name="Bailey T.L."/>
            <person name="Bansal M."/>
            <person name="Baxter L."/>
            <person name="Beisel K.W."/>
            <person name="Bersano T."/>
            <person name="Bono H."/>
            <person name="Chalk A.M."/>
            <person name="Chiu K.P."/>
            <person name="Choudhary V."/>
            <person name="Christoffels A."/>
            <person name="Clutterbuck D.R."/>
            <person name="Crowe M.L."/>
            <person name="Dalla E."/>
            <person name="Dalrymple B.P."/>
            <person name="de Bono B."/>
            <person name="Della Gatta G."/>
            <person name="di Bernardo D."/>
            <person name="Down T."/>
            <person name="Engstrom P."/>
            <person name="Fagiolini M."/>
            <person name="Faulkner G."/>
            <person name="Fletcher C.F."/>
            <person name="Fukushima T."/>
            <person name="Furuno M."/>
            <person name="Futaki S."/>
            <person name="Gariboldi M."/>
            <person name="Georgii-Hemming P."/>
            <person name="Gingeras T.R."/>
            <person name="Gojobori T."/>
            <person name="Green R.E."/>
            <person name="Gustincich S."/>
            <person name="Harbers M."/>
            <person name="Hayashi Y."/>
            <person name="Hensch T.K."/>
            <person name="Hirokawa N."/>
            <person name="Hill D."/>
            <person name="Huminiecki L."/>
            <person name="Iacono M."/>
            <person name="Ikeo K."/>
            <person name="Iwama A."/>
            <person name="Ishikawa T."/>
            <person name="Jakt M."/>
            <person name="Kanapin A."/>
            <person name="Katoh M."/>
            <person name="Kawasawa Y."/>
            <person name="Kelso J."/>
            <person name="Kitamura H."/>
            <person name="Kitano H."/>
            <person name="Kollias G."/>
            <person name="Krishnan S.P."/>
            <person name="Kruger A."/>
            <person name="Kummerfeld S.K."/>
            <person name="Kurochkin I.V."/>
            <person name="Lareau L.F."/>
            <person name="Lazarevic D."/>
            <person name="Lipovich L."/>
            <person name="Liu J."/>
            <person name="Liuni S."/>
            <person name="McWilliam S."/>
            <person name="Madan Babu M."/>
            <person name="Madera M."/>
            <person name="Marchionni L."/>
            <person name="Matsuda H."/>
            <person name="Matsuzawa S."/>
            <person name="Miki H."/>
            <person name="Mignone F."/>
            <person name="Miyake S."/>
            <person name="Morris K."/>
            <person name="Mottagui-Tabar S."/>
            <person name="Mulder N."/>
            <person name="Nakano N."/>
            <person name="Nakauchi H."/>
            <person name="Ng P."/>
            <person name="Nilsson R."/>
            <person name="Nishiguchi S."/>
            <person name="Nishikawa S."/>
            <person name="Nori F."/>
            <person name="Ohara O."/>
            <person name="Okazaki Y."/>
            <person name="Orlando V."/>
            <person name="Pang K.C."/>
            <person name="Pavan W.J."/>
            <person name="Pavesi G."/>
            <person name="Pesole G."/>
            <person name="Petrovsky N."/>
            <person name="Piazza S."/>
            <person name="Reed J."/>
            <person name="Reid J.F."/>
            <person name="Ring B.Z."/>
            <person name="Ringwald M."/>
            <person name="Rost B."/>
            <person name="Ruan Y."/>
            <person name="Salzberg S.L."/>
            <person name="Sandelin A."/>
            <person name="Schneider C."/>
            <person name="Schoenbach C."/>
            <person name="Sekiguchi K."/>
            <person name="Semple C.A."/>
            <person name="Seno S."/>
            <person name="Sessa L."/>
            <person name="Sheng Y."/>
            <person name="Shibata Y."/>
            <person name="Shimada H."/>
            <person name="Shimada K."/>
            <person name="Silva D."/>
            <person name="Sinclair B."/>
            <person name="Sperling S."/>
            <person name="Stupka E."/>
            <person name="Sugiura K."/>
            <person name="Sultana R."/>
            <person name="Takenaka Y."/>
            <person name="Taki K."/>
            <person name="Tammoja K."/>
            <person name="Tan S.L."/>
            <person name="Tang S."/>
            <person name="Taylor M.S."/>
            <person name="Tegner J."/>
            <person name="Teichmann S.A."/>
            <person name="Ueda H.R."/>
            <person name="van Nimwegen E."/>
            <person name="Verardo R."/>
            <person name="Wei C.L."/>
            <person name="Yagi K."/>
            <person name="Yamanishi H."/>
            <person name="Zabarovsky E."/>
            <person name="Zhu S."/>
            <person name="Zimmer A."/>
            <person name="Hide W."/>
            <person name="Bult C."/>
            <person name="Grimmond S.M."/>
            <person name="Teasdale R.D."/>
            <person name="Liu E.T."/>
            <person name="Brusic V."/>
            <person name="Quackenbush J."/>
            <person name="Wahlestedt C."/>
            <person name="Mattick J.S."/>
            <person name="Hume D.A."/>
            <person name="Kai C."/>
            <person name="Sasaki D."/>
            <person name="Tomaru Y."/>
            <person name="Fukuda S."/>
            <person name="Kanamori-Katayama M."/>
            <person name="Suzuki M."/>
            <person name="Aoki J."/>
            <person name="Arakawa T."/>
            <person name="Iida J."/>
            <person name="Imamura K."/>
            <person name="Itoh M."/>
            <person name="Kato T."/>
            <person name="Kawaji H."/>
            <person name="Kawagashira N."/>
            <person name="Kawashima T."/>
            <person name="Kojima M."/>
            <person name="Kondo S."/>
            <person name="Konno H."/>
            <person name="Nakano K."/>
            <person name="Ninomiya N."/>
            <person name="Nishio T."/>
            <person name="Okada M."/>
            <person name="Plessy C."/>
            <person name="Shibata K."/>
            <person name="Shiraki T."/>
            <person name="Suzuki S."/>
            <person name="Tagami M."/>
            <person name="Waki K."/>
            <person name="Watahiki A."/>
            <person name="Okamura-Oho Y."/>
            <person name="Suzuki H."/>
            <person name="Kawai J."/>
            <person name="Hayashizaki Y."/>
        </authorList>
    </citation>
    <scope>NUCLEOTIDE SEQUENCE [LARGE SCALE MRNA] OF 1-658</scope>
    <source>
        <strain>C57BL/6J</strain>
        <strain>NOD</strain>
        <tissue>Corpora quadrigemina</tissue>
        <tissue>Embryo</tissue>
        <tissue>Head</tissue>
        <tissue>Spleen</tissue>
    </source>
</reference>
<reference key="2">
    <citation type="journal article" date="2009" name="PLoS Biol.">
        <title>Lineage-specific biology revealed by a finished genome assembly of the mouse.</title>
        <authorList>
            <person name="Church D.M."/>
            <person name="Goodstadt L."/>
            <person name="Hillier L.W."/>
            <person name="Zody M.C."/>
            <person name="Goldstein S."/>
            <person name="She X."/>
            <person name="Bult C.J."/>
            <person name="Agarwala R."/>
            <person name="Cherry J.L."/>
            <person name="DiCuccio M."/>
            <person name="Hlavina W."/>
            <person name="Kapustin Y."/>
            <person name="Meric P."/>
            <person name="Maglott D."/>
            <person name="Birtle Z."/>
            <person name="Marques A.C."/>
            <person name="Graves T."/>
            <person name="Zhou S."/>
            <person name="Teague B."/>
            <person name="Potamousis K."/>
            <person name="Churas C."/>
            <person name="Place M."/>
            <person name="Herschleb J."/>
            <person name="Runnheim R."/>
            <person name="Forrest D."/>
            <person name="Amos-Landgraf J."/>
            <person name="Schwartz D.C."/>
            <person name="Cheng Z."/>
            <person name="Lindblad-Toh K."/>
            <person name="Eichler E.E."/>
            <person name="Ponting C.P."/>
        </authorList>
    </citation>
    <scope>NUCLEOTIDE SEQUENCE [LARGE SCALE GENOMIC DNA]</scope>
    <source>
        <strain>C57BL/6J</strain>
    </source>
</reference>
<reference key="3">
    <citation type="journal article" date="2004" name="Genome Res.">
        <title>The status, quality, and expansion of the NIH full-length cDNA project: the Mammalian Gene Collection (MGC).</title>
        <authorList>
            <consortium name="The MGC Project Team"/>
        </authorList>
    </citation>
    <scope>NUCLEOTIDE SEQUENCE [LARGE SCALE MRNA]</scope>
    <source>
        <strain>C57BL/6J</strain>
        <strain>FVB/N</strain>
        <tissue>Mammary gland</tissue>
    </source>
</reference>
<reference key="4">
    <citation type="journal article" date="2007" name="Proc. Natl. Acad. Sci. U.S.A.">
        <title>Large-scale phosphorylation analysis of mouse liver.</title>
        <authorList>
            <person name="Villen J."/>
            <person name="Beausoleil S.A."/>
            <person name="Gerber S.A."/>
            <person name="Gygi S.P."/>
        </authorList>
    </citation>
    <scope>PHOSPHORYLATION [LARGE SCALE ANALYSIS] AT SER-594 AND THR-597</scope>
    <scope>IDENTIFICATION BY MASS SPECTROMETRY [LARGE SCALE ANALYSIS]</scope>
    <source>
        <tissue>Liver</tissue>
    </source>
</reference>
<reference key="5">
    <citation type="journal article" date="2009" name="Mol. Cell. Proteomics">
        <title>Large scale localization of protein phosphorylation by use of electron capture dissociation mass spectrometry.</title>
        <authorList>
            <person name="Sweet S.M."/>
            <person name="Bailey C.M."/>
            <person name="Cunningham D.L."/>
            <person name="Heath J.K."/>
            <person name="Cooper H.J."/>
        </authorList>
    </citation>
    <scope>PHOSPHORYLATION [LARGE SCALE ANALYSIS] AT SER-482 AND SER-483</scope>
    <scope>IDENTIFICATION BY MASS SPECTROMETRY [LARGE SCALE ANALYSIS]</scope>
    <source>
        <tissue>Embryonic fibroblast</tissue>
    </source>
</reference>
<reference key="6">
    <citation type="journal article" date="2010" name="Cell">
        <title>A tissue-specific atlas of mouse protein phosphorylation and expression.</title>
        <authorList>
            <person name="Huttlin E.L."/>
            <person name="Jedrychowski M.P."/>
            <person name="Elias J.E."/>
            <person name="Goswami T."/>
            <person name="Rad R."/>
            <person name="Beausoleil S.A."/>
            <person name="Villen J."/>
            <person name="Haas W."/>
            <person name="Sowa M.E."/>
            <person name="Gygi S.P."/>
        </authorList>
    </citation>
    <scope>PHOSPHORYLATION [LARGE SCALE ANALYSIS] AT SER-436; SER-438; SER-480; SER-482; SER-483; SER-594; THR-597; SER-637; SER-638 AND SER-644</scope>
    <scope>IDENTIFICATION BY MASS SPECTROMETRY [LARGE SCALE ANALYSIS]</scope>
    <source>
        <tissue>Brain</tissue>
        <tissue>Brown adipose tissue</tissue>
        <tissue>Heart</tissue>
        <tissue>Kidney</tissue>
        <tissue>Liver</tissue>
        <tissue>Lung</tissue>
        <tissue>Pancreas</tissue>
        <tissue>Spleen</tissue>
        <tissue>Testis</tissue>
    </source>
</reference>
<dbReference type="EMBL" id="AK045520">
    <property type="protein sequence ID" value="BAC32404.1"/>
    <property type="molecule type" value="mRNA"/>
</dbReference>
<dbReference type="EMBL" id="AK081440">
    <property type="protein sequence ID" value="BAC38220.1"/>
    <property type="molecule type" value="mRNA"/>
</dbReference>
<dbReference type="EMBL" id="AK171643">
    <property type="protein sequence ID" value="BAE42583.1"/>
    <property type="molecule type" value="mRNA"/>
</dbReference>
<dbReference type="EMBL" id="AK162461">
    <property type="protein sequence ID" value="BAE36932.1"/>
    <property type="molecule type" value="mRNA"/>
</dbReference>
<dbReference type="EMBL" id="AL732590">
    <property type="status" value="NOT_ANNOTATED_CDS"/>
    <property type="molecule type" value="Genomic_DNA"/>
</dbReference>
<dbReference type="EMBL" id="BC023692">
    <property type="protein sequence ID" value="AAH23692.1"/>
    <property type="molecule type" value="mRNA"/>
</dbReference>
<dbReference type="EMBL" id="BC058585">
    <property type="protein sequence ID" value="AAH58585.1"/>
    <property type="molecule type" value="mRNA"/>
</dbReference>
<dbReference type="EMBL" id="BC085507">
    <property type="protein sequence ID" value="AAH85507.2"/>
    <property type="molecule type" value="mRNA"/>
</dbReference>
<dbReference type="CCDS" id="CCDS38076.1"/>
<dbReference type="RefSeq" id="NP_001019787.2">
    <property type="nucleotide sequence ID" value="NM_001024616.2"/>
</dbReference>
<dbReference type="SMR" id="Q5U3K5"/>
<dbReference type="BioGRID" id="230648">
    <property type="interactions" value="6"/>
</dbReference>
<dbReference type="FunCoup" id="Q5U3K5">
    <property type="interactions" value="2904"/>
</dbReference>
<dbReference type="IntAct" id="Q5U3K5">
    <property type="interactions" value="2"/>
</dbReference>
<dbReference type="MINT" id="Q5U3K5"/>
<dbReference type="STRING" id="10090.ENSMUSP00000058746"/>
<dbReference type="GlyGen" id="Q5U3K5">
    <property type="glycosylation" value="3 sites, 1 O-linked glycan (1 site)"/>
</dbReference>
<dbReference type="iPTMnet" id="Q5U3K5"/>
<dbReference type="PhosphoSitePlus" id="Q5U3K5"/>
<dbReference type="SwissPalm" id="Q5U3K5"/>
<dbReference type="jPOST" id="Q5U3K5"/>
<dbReference type="PaxDb" id="10090-ENSMUSP00000058746"/>
<dbReference type="PeptideAtlas" id="Q5U3K5"/>
<dbReference type="ProteomicsDB" id="253163"/>
<dbReference type="Pumba" id="Q5U3K5"/>
<dbReference type="Antibodypedia" id="32247">
    <property type="antibodies" value="107 antibodies from 21 providers"/>
</dbReference>
<dbReference type="Ensembl" id="ENSMUST00000058137.9">
    <property type="protein sequence ID" value="ENSMUSP00000058746.9"/>
    <property type="gene ID" value="ENSMUSG00000015087.15"/>
</dbReference>
<dbReference type="GeneID" id="227624"/>
<dbReference type="KEGG" id="mmu:227624"/>
<dbReference type="UCSC" id="uc008isr.1">
    <property type="organism name" value="mouse"/>
</dbReference>
<dbReference type="AGR" id="MGI:2442633"/>
<dbReference type="CTD" id="55684"/>
<dbReference type="MGI" id="MGI:2442633">
    <property type="gene designation" value="Rabl6"/>
</dbReference>
<dbReference type="VEuPathDB" id="HostDB:ENSMUSG00000015087"/>
<dbReference type="eggNOG" id="KOG0084">
    <property type="taxonomic scope" value="Eukaryota"/>
</dbReference>
<dbReference type="GeneTree" id="ENSGT00390000016002"/>
<dbReference type="HOGENOM" id="CLU_012780_1_0_1"/>
<dbReference type="InParanoid" id="Q5U3K5"/>
<dbReference type="OMA" id="DHVTYFI"/>
<dbReference type="OrthoDB" id="207081at2759"/>
<dbReference type="PhylomeDB" id="Q5U3K5"/>
<dbReference type="TreeFam" id="TF313974"/>
<dbReference type="BioGRID-ORCS" id="227624">
    <property type="hits" value="4 hits in 78 CRISPR screens"/>
</dbReference>
<dbReference type="ChiTaRS" id="Rabl6">
    <property type="organism name" value="mouse"/>
</dbReference>
<dbReference type="PRO" id="PR:Q5U3K5"/>
<dbReference type="Proteomes" id="UP000000589">
    <property type="component" value="Chromosome 2"/>
</dbReference>
<dbReference type="RNAct" id="Q5U3K5">
    <property type="molecule type" value="protein"/>
</dbReference>
<dbReference type="Bgee" id="ENSMUSG00000015087">
    <property type="expression patterns" value="Expressed in dorsal pancreas and 258 other cell types or tissues"/>
</dbReference>
<dbReference type="GO" id="GO:0034451">
    <property type="term" value="C:centriolar satellite"/>
    <property type="evidence" value="ECO:0007669"/>
    <property type="project" value="Ensembl"/>
</dbReference>
<dbReference type="GO" id="GO:0036064">
    <property type="term" value="C:ciliary basal body"/>
    <property type="evidence" value="ECO:0007669"/>
    <property type="project" value="Ensembl"/>
</dbReference>
<dbReference type="GO" id="GO:0005737">
    <property type="term" value="C:cytoplasm"/>
    <property type="evidence" value="ECO:0000266"/>
    <property type="project" value="MGI"/>
</dbReference>
<dbReference type="GO" id="GO:0005829">
    <property type="term" value="C:cytosol"/>
    <property type="evidence" value="ECO:0007669"/>
    <property type="project" value="Ensembl"/>
</dbReference>
<dbReference type="GO" id="GO:0005634">
    <property type="term" value="C:nucleus"/>
    <property type="evidence" value="ECO:0000266"/>
    <property type="project" value="MGI"/>
</dbReference>
<dbReference type="GO" id="GO:0005525">
    <property type="term" value="F:GTP binding"/>
    <property type="evidence" value="ECO:0000266"/>
    <property type="project" value="MGI"/>
</dbReference>
<dbReference type="FunFam" id="3.40.50.300:FF:000781">
    <property type="entry name" value="RAB, member RAS oncogene family like 6"/>
    <property type="match status" value="1"/>
</dbReference>
<dbReference type="Gene3D" id="3.40.50.300">
    <property type="entry name" value="P-loop containing nucleotide triphosphate hydrolases"/>
    <property type="match status" value="1"/>
</dbReference>
<dbReference type="InterPro" id="IPR027417">
    <property type="entry name" value="P-loop_NTPase"/>
</dbReference>
<dbReference type="InterPro" id="IPR040385">
    <property type="entry name" value="RABL6"/>
</dbReference>
<dbReference type="PANTHER" id="PTHR14932:SF1">
    <property type="entry name" value="RAB-LIKE PROTEIN 6"/>
    <property type="match status" value="1"/>
</dbReference>
<dbReference type="PANTHER" id="PTHR14932">
    <property type="entry name" value="RAS GTPASE-RELATED"/>
    <property type="match status" value="1"/>
</dbReference>
<dbReference type="Pfam" id="PF08477">
    <property type="entry name" value="Roc"/>
    <property type="match status" value="1"/>
</dbReference>
<dbReference type="PRINTS" id="PR00449">
    <property type="entry name" value="RASTRNSFRMNG"/>
</dbReference>
<dbReference type="SMART" id="SM00175">
    <property type="entry name" value="RAB"/>
    <property type="match status" value="1"/>
</dbReference>
<dbReference type="SUPFAM" id="SSF52540">
    <property type="entry name" value="P-loop containing nucleoside triphosphate hydrolases"/>
    <property type="match status" value="1"/>
</dbReference>
<dbReference type="PROSITE" id="PS51419">
    <property type="entry name" value="RAB"/>
    <property type="match status" value="1"/>
</dbReference>
<comment type="function">
    <text evidence="1">May enhance cellular proliferation. May reduce growth inhibitory activity of CDKN2A (By similarity).</text>
</comment>
<comment type="subcellular location">
    <subcellularLocation>
        <location evidence="5">Nucleus</location>
    </subcellularLocation>
    <subcellularLocation>
        <location evidence="2">Cytoplasm</location>
    </subcellularLocation>
    <text evidence="2">Predominantly cytoplasmic.</text>
</comment>
<comment type="similarity">
    <text evidence="5">Belongs to the small GTPase superfamily. Rab family.</text>
</comment>
<proteinExistence type="evidence at protein level"/>
<keyword id="KW-0007">Acetylation</keyword>
<keyword id="KW-0963">Cytoplasm</keyword>
<keyword id="KW-0342">GTP-binding</keyword>
<keyword id="KW-0547">Nucleotide-binding</keyword>
<keyword id="KW-0539">Nucleus</keyword>
<keyword id="KW-0597">Phosphoprotein</keyword>
<keyword id="KW-1185">Reference proteome</keyword>
<feature type="chain" id="PRO_0000274224" description="Rab-like protein 6">
    <location>
        <begin position="1"/>
        <end position="725"/>
    </location>
</feature>
<feature type="region of interest" description="Small GTPase-like">
    <location>
        <begin position="39"/>
        <end position="279"/>
    </location>
</feature>
<feature type="region of interest" description="Disordered" evidence="4">
    <location>
        <begin position="281"/>
        <end position="364"/>
    </location>
</feature>
<feature type="region of interest" description="Disordered" evidence="4">
    <location>
        <begin position="378"/>
        <end position="725"/>
    </location>
</feature>
<feature type="region of interest" description="Interaction with CDKN2A" evidence="1">
    <location>
        <begin position="652"/>
        <end position="690"/>
    </location>
</feature>
<feature type="compositionally biased region" description="Low complexity" evidence="4">
    <location>
        <begin position="291"/>
        <end position="325"/>
    </location>
</feature>
<feature type="compositionally biased region" description="Low complexity" evidence="4">
    <location>
        <begin position="343"/>
        <end position="353"/>
    </location>
</feature>
<feature type="compositionally biased region" description="Basic and acidic residues" evidence="4">
    <location>
        <begin position="410"/>
        <end position="427"/>
    </location>
</feature>
<feature type="compositionally biased region" description="Polar residues" evidence="4">
    <location>
        <begin position="499"/>
        <end position="514"/>
    </location>
</feature>
<feature type="compositionally biased region" description="Basic and acidic residues" evidence="4">
    <location>
        <begin position="537"/>
        <end position="549"/>
    </location>
</feature>
<feature type="compositionally biased region" description="Acidic residues" evidence="4">
    <location>
        <begin position="569"/>
        <end position="578"/>
    </location>
</feature>
<feature type="compositionally biased region" description="Basic and acidic residues" evidence="4">
    <location>
        <begin position="632"/>
        <end position="649"/>
    </location>
</feature>
<feature type="compositionally biased region" description="Basic residues" evidence="4">
    <location>
        <begin position="666"/>
        <end position="675"/>
    </location>
</feature>
<feature type="compositionally biased region" description="Gly residues" evidence="4">
    <location>
        <begin position="707"/>
        <end position="725"/>
    </location>
</feature>
<feature type="binding site" evidence="3">
    <location>
        <begin position="50"/>
        <end position="57"/>
    </location>
    <ligand>
        <name>GTP</name>
        <dbReference type="ChEBI" id="CHEBI:37565"/>
    </ligand>
</feature>
<feature type="binding site" evidence="3">
    <location>
        <begin position="100"/>
        <end position="104"/>
    </location>
    <ligand>
        <name>GTP</name>
        <dbReference type="ChEBI" id="CHEBI:37565"/>
    </ligand>
</feature>
<feature type="binding site" evidence="3">
    <location>
        <begin position="177"/>
        <end position="179"/>
    </location>
    <ligand>
        <name>GTP</name>
        <dbReference type="ChEBI" id="CHEBI:37565"/>
    </ligand>
</feature>
<feature type="modified residue" description="N-acetylmethionine" evidence="2">
    <location>
        <position position="1"/>
    </location>
</feature>
<feature type="modified residue" description="Phosphoserine" evidence="2">
    <location>
        <position position="414"/>
    </location>
</feature>
<feature type="modified residue" description="Phosphoserine" evidence="8">
    <location>
        <position position="436"/>
    </location>
</feature>
<feature type="modified residue" description="Phosphoserine" evidence="8">
    <location>
        <position position="438"/>
    </location>
</feature>
<feature type="modified residue" description="Phosphoserine" evidence="8">
    <location>
        <position position="480"/>
    </location>
</feature>
<feature type="modified residue" description="Phosphoserine" evidence="7 8">
    <location>
        <position position="482"/>
    </location>
</feature>
<feature type="modified residue" description="Phosphoserine" evidence="7 8">
    <location>
        <position position="483"/>
    </location>
</feature>
<feature type="modified residue" description="Phosphoserine" evidence="2">
    <location>
        <position position="502"/>
    </location>
</feature>
<feature type="modified residue" description="Phosphoserine" evidence="2">
    <location>
        <position position="575"/>
    </location>
</feature>
<feature type="modified residue" description="Phosphoserine" evidence="6 8">
    <location>
        <position position="594"/>
    </location>
</feature>
<feature type="modified residue" description="Phosphothreonine" evidence="6 8">
    <location>
        <position position="597"/>
    </location>
</feature>
<feature type="modified residue" description="Phosphoserine" evidence="8">
    <location>
        <position position="637"/>
    </location>
</feature>
<feature type="modified residue" description="Phosphoserine" evidence="8">
    <location>
        <position position="638"/>
    </location>
</feature>
<feature type="modified residue" description="Phosphoserine" evidence="8">
    <location>
        <position position="644"/>
    </location>
</feature>
<feature type="sequence conflict" description="In Ref. 1; BAE42583." evidence="5" ref="1">
    <original>R</original>
    <variation>G</variation>
    <location>
        <position position="520"/>
    </location>
</feature>
<feature type="sequence conflict" description="In Ref. 3; AAH58585." evidence="5" ref="3">
    <original>S</original>
    <variation>K</variation>
    <location>
        <position position="670"/>
    </location>
</feature>
<protein>
    <recommendedName>
        <fullName>Rab-like protein 6</fullName>
    </recommendedName>
    <alternativeName>
        <fullName>GTP-binding protein Parf</fullName>
    </alternativeName>
    <alternativeName>
        <fullName>Rab-like protein 1</fullName>
        <shortName>RBEL1</shortName>
    </alternativeName>
</protein>
<evidence type="ECO:0000250" key="1"/>
<evidence type="ECO:0000250" key="2">
    <source>
        <dbReference type="UniProtKB" id="Q3YEC7"/>
    </source>
</evidence>
<evidence type="ECO:0000255" key="3"/>
<evidence type="ECO:0000256" key="4">
    <source>
        <dbReference type="SAM" id="MobiDB-lite"/>
    </source>
</evidence>
<evidence type="ECO:0000305" key="5"/>
<evidence type="ECO:0007744" key="6">
    <source>
    </source>
</evidence>
<evidence type="ECO:0007744" key="7">
    <source>
    </source>
</evidence>
<evidence type="ECO:0007744" key="8">
    <source>
    </source>
</evidence>
<sequence length="725" mass="79831">MFSALKKLVGSEQAPGRDKNIPAGLQSMNQALQRRFAKGVQYNMKIVIRGDRNTGKTALWHRLQGKKFVEEYIPTQEIQVTSIHWNYKTTDDVVKVEVWDVVDKGKCKKRGDGLKTENDPQEAESELALDAEFLDVYKNCNGVVMMFDITKQWTFNYVLRELPKVPTHVPVCVLGNYRDMGEHRVILPDDVRDFIEHLDRPPGSSYFRYAESSMKNSFGLKYLHKFFNIPFLQLQRETLLRQLETNQLDIDATLEELSVQQETEDQNYSIFLEMMEARSRGHASPLAANGQSPSSGSQSPVVPPSAVSTGSSSPSTPQPAPQLSLGVSSTCPSAPSPVPSLEAMPSSVHSSAPAPTPAPAPAPAQRRSIISRLFGTSPAAEVTPSPPEPAPALEAPARVQNVEDFVPEDGLDRSFLEDTSVPKDKKVGAKGPQQDSDSDDGEALGGNPMVAGFQDDVDIEDQTHGKSLLPSDPMPSKNISLSSEEEAEGLAGHPRVAPQQCSEPETKWSSTKVSHPQKKRAPTRGTPPWSDGLTTDDSERPQEGKDKQVSSESDPEGPIAAQMLSFVMDDPDFESDESDTQRRMGRFPVREDLSDVTDEDTGPAQPPPPSKLPGAFRLKNDSDLFGLGLEEMGPKESSDEDRDSKLPSKEKKKKKKKSKEEEEKTTKKKSKHKKSKDKEEGKEDRKKKRKPPRSKEQKAADELEAFLGGGAPGSRHPGGGDYEEL</sequence>